<keyword id="KW-0963">Cytoplasm</keyword>
<keyword id="KW-0217">Developmental protein</keyword>
<keyword id="KW-0539">Nucleus</keyword>
<keyword id="KW-0687">Ribonucleoprotein</keyword>
<keyword id="KW-0689">Ribosomal protein</keyword>
<protein>
    <recommendedName>
        <fullName evidence="1">Small ribosomal subunit protein uS2</fullName>
    </recommendedName>
    <alternativeName>
        <fullName evidence="3">40S ribosomal protein SA</fullName>
    </alternativeName>
    <alternativeName>
        <fullName evidence="1">Protein stubarista</fullName>
    </alternativeName>
</protein>
<name>RSSA_DROSI</name>
<evidence type="ECO:0000255" key="1">
    <source>
        <dbReference type="HAMAP-Rule" id="MF_03015"/>
    </source>
</evidence>
<evidence type="ECO:0000256" key="2">
    <source>
        <dbReference type="SAM" id="MobiDB-lite"/>
    </source>
</evidence>
<evidence type="ECO:0000305" key="3"/>
<feature type="initiator methionine" description="Removed" evidence="1">
    <location>
        <position position="1"/>
    </location>
</feature>
<feature type="chain" id="PRO_0000371587" description="Small ribosomal subunit protein uS2">
    <location>
        <begin position="2"/>
        <end position="270"/>
    </location>
</feature>
<feature type="region of interest" description="Disordered" evidence="2">
    <location>
        <begin position="251"/>
        <end position="270"/>
    </location>
</feature>
<feature type="compositionally biased region" description="Polar residues" evidence="2">
    <location>
        <begin position="261"/>
        <end position="270"/>
    </location>
</feature>
<accession>Q0H6L1</accession>
<proteinExistence type="inferred from homology"/>
<sequence length="270" mass="30228">MSGGLDILSLKEDDITKMLVATTHLGSENVNFQMEQYVYKRRADGVNILNLGKTWEKLQLAARAIVAIDNPSDIFVISSRPIGQRAVLKFAKYTDTTPIAGRFTPGAFTNQIQPAFREPRLLVVTDPNTDHQPIMEASYVNIPVIAFTNTDSPLRYIDIAIPCNNKSAHSIGLMWWLLAREVLRLRGTISRSVEWPVVVDLFFYRDPEEAEKEEAAAKELLPPPKIEEAVDHPVEETTNWADEVAAETVGGVEDWNEDTVKTSWGSDGQF</sequence>
<gene>
    <name evidence="1" type="primary">sta</name>
</gene>
<reference key="1">
    <citation type="journal article" date="2006" name="Genetics">
        <title>Strong regional heterogeneity in base composition evolution on the Drosophila X chromosome.</title>
        <authorList>
            <person name="Ko W.-Y."/>
            <person name="Piao S."/>
            <person name="Akashi H."/>
        </authorList>
    </citation>
    <scope>NUCLEOTIDE SEQUENCE [GENOMIC DNA]</scope>
</reference>
<organism>
    <name type="scientific">Drosophila simulans</name>
    <name type="common">Fruit fly</name>
    <dbReference type="NCBI Taxonomy" id="7240"/>
    <lineage>
        <taxon>Eukaryota</taxon>
        <taxon>Metazoa</taxon>
        <taxon>Ecdysozoa</taxon>
        <taxon>Arthropoda</taxon>
        <taxon>Hexapoda</taxon>
        <taxon>Insecta</taxon>
        <taxon>Pterygota</taxon>
        <taxon>Neoptera</taxon>
        <taxon>Endopterygota</taxon>
        <taxon>Diptera</taxon>
        <taxon>Brachycera</taxon>
        <taxon>Muscomorpha</taxon>
        <taxon>Ephydroidea</taxon>
        <taxon>Drosophilidae</taxon>
        <taxon>Drosophila</taxon>
        <taxon>Sophophora</taxon>
    </lineage>
</organism>
<dbReference type="EMBL" id="DQ185016">
    <property type="protein sequence ID" value="ABB00655.1"/>
    <property type="molecule type" value="Genomic_DNA"/>
</dbReference>
<dbReference type="SMR" id="Q0H6L1"/>
<dbReference type="EnsemblMetazoa" id="FBtr0355158">
    <property type="protein sequence ID" value="FBpp0319454"/>
    <property type="gene ID" value="FBgn0029243"/>
</dbReference>
<dbReference type="EnsemblMetazoa" id="XM_016173143.2">
    <property type="protein sequence ID" value="XP_016037676.1"/>
    <property type="gene ID" value="LOC6724869"/>
</dbReference>
<dbReference type="GeneID" id="6724869"/>
<dbReference type="KEGG" id="dsi:Dsimw501_GD16420"/>
<dbReference type="CTD" id="104044"/>
<dbReference type="OrthoDB" id="414863at2759"/>
<dbReference type="ChiTaRS" id="sta">
    <property type="organism name" value="fly"/>
</dbReference>
<dbReference type="Bgee" id="FBgn0029243">
    <property type="expression patterns" value="Expressed in embryo and 3 other cell types or tissues"/>
</dbReference>
<dbReference type="GO" id="GO:0022627">
    <property type="term" value="C:cytosolic small ribosomal subunit"/>
    <property type="evidence" value="ECO:0007669"/>
    <property type="project" value="UniProtKB-UniRule"/>
</dbReference>
<dbReference type="GO" id="GO:0005634">
    <property type="term" value="C:nucleus"/>
    <property type="evidence" value="ECO:0007669"/>
    <property type="project" value="UniProtKB-SubCell"/>
</dbReference>
<dbReference type="GO" id="GO:0043022">
    <property type="term" value="F:ribosome binding"/>
    <property type="evidence" value="ECO:0007669"/>
    <property type="project" value="EnsemblMetazoa"/>
</dbReference>
<dbReference type="GO" id="GO:0003735">
    <property type="term" value="F:structural constituent of ribosome"/>
    <property type="evidence" value="ECO:0007669"/>
    <property type="project" value="UniProtKB-UniRule"/>
</dbReference>
<dbReference type="GO" id="GO:0000028">
    <property type="term" value="P:ribosomal small subunit assembly"/>
    <property type="evidence" value="ECO:0007669"/>
    <property type="project" value="UniProtKB-UniRule"/>
</dbReference>
<dbReference type="GO" id="GO:0006412">
    <property type="term" value="P:translation"/>
    <property type="evidence" value="ECO:0007669"/>
    <property type="project" value="UniProtKB-UniRule"/>
</dbReference>
<dbReference type="CDD" id="cd01425">
    <property type="entry name" value="RPS2"/>
    <property type="match status" value="1"/>
</dbReference>
<dbReference type="FunFam" id="3.40.50.10490:FF:000012">
    <property type="entry name" value="40S ribosomal protein SA"/>
    <property type="match status" value="1"/>
</dbReference>
<dbReference type="Gene3D" id="3.40.50.10490">
    <property type="entry name" value="Glucose-6-phosphate isomerase like protein, domain 1"/>
    <property type="match status" value="1"/>
</dbReference>
<dbReference type="HAMAP" id="MF_03015">
    <property type="entry name" value="Ribosomal_S2_euk"/>
    <property type="match status" value="1"/>
</dbReference>
<dbReference type="InterPro" id="IPR001865">
    <property type="entry name" value="Ribosomal_uS2"/>
</dbReference>
<dbReference type="InterPro" id="IPR032281">
    <property type="entry name" value="Ribosomal_uS2_C"/>
</dbReference>
<dbReference type="InterPro" id="IPR018130">
    <property type="entry name" value="Ribosomal_uS2_CS"/>
</dbReference>
<dbReference type="InterPro" id="IPR027498">
    <property type="entry name" value="Ribosomal_uS2_euk"/>
</dbReference>
<dbReference type="InterPro" id="IPR005707">
    <property type="entry name" value="Ribosomal_uS2_euk/arc"/>
</dbReference>
<dbReference type="InterPro" id="IPR023591">
    <property type="entry name" value="Ribosomal_uS2_flav_dom_sf"/>
</dbReference>
<dbReference type="NCBIfam" id="TIGR01012">
    <property type="entry name" value="uS2_euk_arch"/>
    <property type="match status" value="1"/>
</dbReference>
<dbReference type="PANTHER" id="PTHR11489">
    <property type="entry name" value="40S RIBOSOMAL PROTEIN SA"/>
    <property type="match status" value="1"/>
</dbReference>
<dbReference type="Pfam" id="PF16122">
    <property type="entry name" value="40S_SA_C"/>
    <property type="match status" value="1"/>
</dbReference>
<dbReference type="Pfam" id="PF00318">
    <property type="entry name" value="Ribosomal_S2"/>
    <property type="match status" value="2"/>
</dbReference>
<dbReference type="PRINTS" id="PR00395">
    <property type="entry name" value="RIBOSOMALS2"/>
</dbReference>
<dbReference type="SUPFAM" id="SSF52313">
    <property type="entry name" value="Ribosomal protein S2"/>
    <property type="match status" value="1"/>
</dbReference>
<dbReference type="PROSITE" id="PS00962">
    <property type="entry name" value="RIBOSOMAL_S2_1"/>
    <property type="match status" value="1"/>
</dbReference>
<dbReference type="PROSITE" id="PS00963">
    <property type="entry name" value="RIBOSOMAL_S2_2"/>
    <property type="match status" value="1"/>
</dbReference>
<comment type="function">
    <text evidence="1">Required for the assembly and/or stability of the 40S ribosomal subunit. Required for the processing of the 20S rRNA-precursor to mature 18S rRNA in a late step of the maturation of 40S ribosomal subunits. Required during oogenesis and imaginal development.</text>
</comment>
<comment type="subunit">
    <text evidence="1">Component of the small ribosomal subunit. Mature ribosomes consist of a small (40S) and a large (60S) subunit. The 40S subunit contains about 33 different proteins and 1 molecule of RNA (18S). The 60S subunit contains about 49 different proteins and 3 molecules of RNA (28S, 5.8S and 5S). Interacts with oho23B/rpS21.</text>
</comment>
<comment type="subcellular location">
    <subcellularLocation>
        <location evidence="1">Cytoplasm</location>
    </subcellularLocation>
    <subcellularLocation>
        <location evidence="1">Nucleus</location>
    </subcellularLocation>
    <text evidence="1">May associate with nascent RNP complexes within the nucleus.</text>
</comment>
<comment type="similarity">
    <text evidence="1">Belongs to the universal ribosomal protein uS2 family.</text>
</comment>